<sequence length="264" mass="30332">MSSNIFGSVPILVVVAIQLLLVHNVSSQNVTNDYLNHQCNNTQGRYTHGSTFEKNLNQVLHNISNLDLRYGYAYVSNVVAYKVSKDPNIVFVLLQCRGDSFGSKCHSCLSTAVSGLRERCPGNRGATIWYDQCLLEISSVDSEGRIHYKRMFYMQNPTNVTNDPKRFEDKRRDLLHKLMLEATKDSKENGAKGLLYAVGEMRIGRNKMYAMVQCTQDLWQTGCHVCLEWITQMKYGEFFYRKPGGRVCGRSCSFRYELYPFLRR</sequence>
<proteinExistence type="evidence at transcript level"/>
<reference key="1">
    <citation type="journal article" date="2000" name="DNA Res.">
        <title>Structural analysis of Arabidopsis thaliana chromosome 3. I. Sequence features of the regions of 4,504,864 bp covered by sixty P1 and TAC clones.</title>
        <authorList>
            <person name="Sato S."/>
            <person name="Nakamura Y."/>
            <person name="Kaneko T."/>
            <person name="Katoh T."/>
            <person name="Asamizu E."/>
            <person name="Tabata S."/>
        </authorList>
    </citation>
    <scope>NUCLEOTIDE SEQUENCE [LARGE SCALE GENOMIC DNA]</scope>
    <source>
        <strain>cv. Columbia</strain>
    </source>
</reference>
<reference key="2">
    <citation type="journal article" date="2017" name="Plant J.">
        <title>Araport11: a complete reannotation of the Arabidopsis thaliana reference genome.</title>
        <authorList>
            <person name="Cheng C.Y."/>
            <person name="Krishnakumar V."/>
            <person name="Chan A.P."/>
            <person name="Thibaud-Nissen F."/>
            <person name="Schobel S."/>
            <person name="Town C.D."/>
        </authorList>
    </citation>
    <scope>GENOME REANNOTATION</scope>
    <source>
        <strain>cv. Columbia</strain>
    </source>
</reference>
<reference key="3">
    <citation type="journal article" date="2001" name="Plant Physiol.">
        <title>A superfamily of proteins with novel cysteine-rich repeats.</title>
        <authorList>
            <person name="Chen Z."/>
        </authorList>
    </citation>
    <scope>GENE FAMILY ORGANIZATION</scope>
    <scope>NOMENCLATURE</scope>
</reference>
<keyword id="KW-1185">Reference proteome</keyword>
<keyword id="KW-0677">Repeat</keyword>
<keyword id="KW-0964">Secreted</keyword>
<keyword id="KW-0732">Signal</keyword>
<feature type="signal peptide" evidence="1">
    <location>
        <begin position="1"/>
        <end position="27"/>
    </location>
</feature>
<feature type="chain" id="PRO_0000296154" description="Cysteine-rich repeat secretory protein 26">
    <location>
        <begin position="28"/>
        <end position="264"/>
    </location>
</feature>
<feature type="domain" description="Gnk2-homologous 1" evidence="2">
    <location>
        <begin position="34"/>
        <end position="142"/>
    </location>
</feature>
<feature type="domain" description="Gnk2-homologous 2" evidence="2">
    <location>
        <begin position="148"/>
        <end position="261"/>
    </location>
</feature>
<evidence type="ECO:0000255" key="1"/>
<evidence type="ECO:0000255" key="2">
    <source>
        <dbReference type="PROSITE-ProRule" id="PRU00806"/>
    </source>
</evidence>
<evidence type="ECO:0000305" key="3"/>
<gene>
    <name type="primary">CRRSP26</name>
    <name type="ordered locus">At3g21970</name>
    <name type="ORF">MZN24.14</name>
</gene>
<name>CRR26_ARATH</name>
<protein>
    <recommendedName>
        <fullName>Cysteine-rich repeat secretory protein 26</fullName>
    </recommendedName>
</protein>
<accession>Q9LRL1</accession>
<dbReference type="EMBL" id="AB028622">
    <property type="protein sequence ID" value="BAB01379.1"/>
    <property type="status" value="ALT_SEQ"/>
    <property type="molecule type" value="Genomic_DNA"/>
</dbReference>
<dbReference type="EMBL" id="CP002686">
    <property type="protein sequence ID" value="AEE76573.1"/>
    <property type="molecule type" value="Genomic_DNA"/>
</dbReference>
<dbReference type="RefSeq" id="NP_188835.1">
    <property type="nucleotide sequence ID" value="NM_113093.3"/>
</dbReference>
<dbReference type="SMR" id="Q9LRL1"/>
<dbReference type="FunCoup" id="Q9LRL1">
    <property type="interactions" value="18"/>
</dbReference>
<dbReference type="PaxDb" id="3702-AT3G21970.1"/>
<dbReference type="ProteomicsDB" id="224530"/>
<dbReference type="EnsemblPlants" id="AT3G21970.1">
    <property type="protein sequence ID" value="AT3G21970.1"/>
    <property type="gene ID" value="AT3G21970"/>
</dbReference>
<dbReference type="GeneID" id="821756"/>
<dbReference type="Gramene" id="AT3G21970.1">
    <property type="protein sequence ID" value="AT3G21970.1"/>
    <property type="gene ID" value="AT3G21970"/>
</dbReference>
<dbReference type="KEGG" id="ath:AT3G21970"/>
<dbReference type="Araport" id="AT3G21970"/>
<dbReference type="TAIR" id="AT3G21970"/>
<dbReference type="eggNOG" id="ENOG502QPWH">
    <property type="taxonomic scope" value="Eukaryota"/>
</dbReference>
<dbReference type="HOGENOM" id="CLU_000288_35_0_1"/>
<dbReference type="InParanoid" id="Q9LRL1"/>
<dbReference type="OMA" id="CLEWITQ"/>
<dbReference type="OrthoDB" id="1062509at2759"/>
<dbReference type="PhylomeDB" id="Q9LRL1"/>
<dbReference type="PRO" id="PR:Q9LRL1"/>
<dbReference type="Proteomes" id="UP000006548">
    <property type="component" value="Chromosome 3"/>
</dbReference>
<dbReference type="ExpressionAtlas" id="Q9LRL1">
    <property type="expression patterns" value="baseline and differential"/>
</dbReference>
<dbReference type="GO" id="GO:0005576">
    <property type="term" value="C:extracellular region"/>
    <property type="evidence" value="ECO:0007669"/>
    <property type="project" value="UniProtKB-SubCell"/>
</dbReference>
<dbReference type="CDD" id="cd23509">
    <property type="entry name" value="Gnk2-like"/>
    <property type="match status" value="2"/>
</dbReference>
<dbReference type="Gene3D" id="3.30.430.20">
    <property type="entry name" value="Gnk2 domain, C-X8-C-X2-C motif"/>
    <property type="match status" value="2"/>
</dbReference>
<dbReference type="InterPro" id="IPR050581">
    <property type="entry name" value="CRR_secretory_protein"/>
</dbReference>
<dbReference type="InterPro" id="IPR002902">
    <property type="entry name" value="GNK2"/>
</dbReference>
<dbReference type="InterPro" id="IPR038408">
    <property type="entry name" value="GNK2_sf"/>
</dbReference>
<dbReference type="PANTHER" id="PTHR32411:SF70">
    <property type="entry name" value="CYSTEINE-RICH REPEAT SECRETORY PROTEIN 26-RELATED"/>
    <property type="match status" value="1"/>
</dbReference>
<dbReference type="PANTHER" id="PTHR32411">
    <property type="entry name" value="CYSTEINE-RICH REPEAT SECRETORY PROTEIN 38-RELATED"/>
    <property type="match status" value="1"/>
</dbReference>
<dbReference type="Pfam" id="PF01657">
    <property type="entry name" value="Stress-antifung"/>
    <property type="match status" value="2"/>
</dbReference>
<dbReference type="PROSITE" id="PS51473">
    <property type="entry name" value="GNK2"/>
    <property type="match status" value="2"/>
</dbReference>
<organism>
    <name type="scientific">Arabidopsis thaliana</name>
    <name type="common">Mouse-ear cress</name>
    <dbReference type="NCBI Taxonomy" id="3702"/>
    <lineage>
        <taxon>Eukaryota</taxon>
        <taxon>Viridiplantae</taxon>
        <taxon>Streptophyta</taxon>
        <taxon>Embryophyta</taxon>
        <taxon>Tracheophyta</taxon>
        <taxon>Spermatophyta</taxon>
        <taxon>Magnoliopsida</taxon>
        <taxon>eudicotyledons</taxon>
        <taxon>Gunneridae</taxon>
        <taxon>Pentapetalae</taxon>
        <taxon>rosids</taxon>
        <taxon>malvids</taxon>
        <taxon>Brassicales</taxon>
        <taxon>Brassicaceae</taxon>
        <taxon>Camelineae</taxon>
        <taxon>Arabidopsis</taxon>
    </lineage>
</organism>
<comment type="subcellular location">
    <subcellularLocation>
        <location evidence="3">Secreted</location>
    </subcellularLocation>
</comment>
<comment type="similarity">
    <text evidence="3">Belongs to the cysteine-rich repeat secretory protein family.</text>
</comment>
<comment type="sequence caution" evidence="3">
    <conflict type="erroneous gene model prediction">
        <sequence resource="EMBL-CDS" id="BAB01379"/>
    </conflict>
</comment>